<feature type="chain" id="PRO_0000136074" description="Shikimate dehydrogenase (NADP(+))">
    <location>
        <begin position="1"/>
        <end position="273"/>
    </location>
</feature>
<feature type="active site" description="Proton acceptor" evidence="1">
    <location>
        <position position="63"/>
    </location>
</feature>
<feature type="binding site" evidence="1">
    <location>
        <begin position="14"/>
        <end position="16"/>
    </location>
    <ligand>
        <name>shikimate</name>
        <dbReference type="ChEBI" id="CHEBI:36208"/>
    </ligand>
</feature>
<feature type="binding site" evidence="1">
    <location>
        <position position="59"/>
    </location>
    <ligand>
        <name>shikimate</name>
        <dbReference type="ChEBI" id="CHEBI:36208"/>
    </ligand>
</feature>
<feature type="binding site" evidence="1">
    <location>
        <position position="84"/>
    </location>
    <ligand>
        <name>shikimate</name>
        <dbReference type="ChEBI" id="CHEBI:36208"/>
    </ligand>
</feature>
<feature type="binding site" evidence="1">
    <location>
        <position position="99"/>
    </location>
    <ligand>
        <name>shikimate</name>
        <dbReference type="ChEBI" id="CHEBI:36208"/>
    </ligand>
</feature>
<feature type="binding site" evidence="1">
    <location>
        <begin position="122"/>
        <end position="126"/>
    </location>
    <ligand>
        <name>NADP(+)</name>
        <dbReference type="ChEBI" id="CHEBI:58349"/>
    </ligand>
</feature>
<feature type="binding site" evidence="1">
    <location>
        <position position="212"/>
    </location>
    <ligand>
        <name>NADP(+)</name>
        <dbReference type="ChEBI" id="CHEBI:58349"/>
    </ligand>
</feature>
<feature type="binding site" evidence="1">
    <location>
        <position position="214"/>
    </location>
    <ligand>
        <name>shikimate</name>
        <dbReference type="ChEBI" id="CHEBI:36208"/>
    </ligand>
</feature>
<feature type="binding site" evidence="1">
    <location>
        <position position="235"/>
    </location>
    <ligand>
        <name>NADP(+)</name>
        <dbReference type="ChEBI" id="CHEBI:58349"/>
    </ligand>
</feature>
<evidence type="ECO:0000255" key="1">
    <source>
        <dbReference type="HAMAP-Rule" id="MF_00222"/>
    </source>
</evidence>
<proteinExistence type="inferred from homology"/>
<name>AROE_AERPE</name>
<reference key="1">
    <citation type="journal article" date="1999" name="DNA Res.">
        <title>Complete genome sequence of an aerobic hyper-thermophilic crenarchaeon, Aeropyrum pernix K1.</title>
        <authorList>
            <person name="Kawarabayasi Y."/>
            <person name="Hino Y."/>
            <person name="Horikawa H."/>
            <person name="Yamazaki S."/>
            <person name="Haikawa Y."/>
            <person name="Jin-no K."/>
            <person name="Takahashi M."/>
            <person name="Sekine M."/>
            <person name="Baba S."/>
            <person name="Ankai A."/>
            <person name="Kosugi H."/>
            <person name="Hosoyama A."/>
            <person name="Fukui S."/>
            <person name="Nagai Y."/>
            <person name="Nishijima K."/>
            <person name="Nakazawa H."/>
            <person name="Takamiya M."/>
            <person name="Masuda S."/>
            <person name="Funahashi T."/>
            <person name="Tanaka T."/>
            <person name="Kudoh Y."/>
            <person name="Yamazaki J."/>
            <person name="Kushida N."/>
            <person name="Oguchi A."/>
            <person name="Aoki K."/>
            <person name="Kubota K."/>
            <person name="Nakamura Y."/>
            <person name="Nomura N."/>
            <person name="Sako Y."/>
            <person name="Kikuchi H."/>
        </authorList>
    </citation>
    <scope>NUCLEOTIDE SEQUENCE [LARGE SCALE GENOMIC DNA]</scope>
    <source>
        <strain>ATCC 700893 / DSM 11879 / JCM 9820 / NBRC 100138 / K1</strain>
    </source>
</reference>
<sequence>MIRLALFGSGVSSSLSPAIYRGFAAKRGLRLEYRVYEAGPGGLAPALRMAGELHGFNVTKPLKREALSLASTLDSHARAIGAVNTMVAGEEGWEGFNTDWKGFLDSLKLYTASPPDTALVIGAGGAGRAAAYALATWGAGRVLIASRTGLTARRAAQDLAGLGAEVEPVPPGGLEDAAAASDVVVNATPLGWDGVSTPVERGFREGCIAVDMVYRPLATPFLRRAAASGCTPVDGLWMLAIQAAENIAVWLGLEASPVELRTYALEAMRGGRG</sequence>
<accession>Q9YEK4</accession>
<protein>
    <recommendedName>
        <fullName evidence="1">Shikimate dehydrogenase (NADP(+))</fullName>
        <shortName evidence="1">SDH</shortName>
        <ecNumber evidence="1">1.1.1.25</ecNumber>
    </recommendedName>
</protein>
<keyword id="KW-0028">Amino-acid biosynthesis</keyword>
<keyword id="KW-0057">Aromatic amino acid biosynthesis</keyword>
<keyword id="KW-0521">NADP</keyword>
<keyword id="KW-0560">Oxidoreductase</keyword>
<keyword id="KW-1185">Reference proteome</keyword>
<organism>
    <name type="scientific">Aeropyrum pernix (strain ATCC 700893 / DSM 11879 / JCM 9820 / NBRC 100138 / K1)</name>
    <dbReference type="NCBI Taxonomy" id="272557"/>
    <lineage>
        <taxon>Archaea</taxon>
        <taxon>Thermoproteota</taxon>
        <taxon>Thermoprotei</taxon>
        <taxon>Desulfurococcales</taxon>
        <taxon>Desulfurococcaceae</taxon>
        <taxon>Aeropyrum</taxon>
    </lineage>
</organism>
<comment type="function">
    <text evidence="1">Involved in the biosynthesis of the chorismate, which leads to the biosynthesis of aromatic amino acids. Catalyzes the reversible NADPH linked reduction of 3-dehydroshikimate (DHSA) to yield shikimate (SA).</text>
</comment>
<comment type="catalytic activity">
    <reaction evidence="1">
        <text>shikimate + NADP(+) = 3-dehydroshikimate + NADPH + H(+)</text>
        <dbReference type="Rhea" id="RHEA:17737"/>
        <dbReference type="ChEBI" id="CHEBI:15378"/>
        <dbReference type="ChEBI" id="CHEBI:16630"/>
        <dbReference type="ChEBI" id="CHEBI:36208"/>
        <dbReference type="ChEBI" id="CHEBI:57783"/>
        <dbReference type="ChEBI" id="CHEBI:58349"/>
        <dbReference type="EC" id="1.1.1.25"/>
    </reaction>
</comment>
<comment type="pathway">
    <text evidence="1">Metabolic intermediate biosynthesis; chorismate biosynthesis; chorismate from D-erythrose 4-phosphate and phosphoenolpyruvate: step 4/7.</text>
</comment>
<comment type="subunit">
    <text evidence="1">Homodimer.</text>
</comment>
<comment type="similarity">
    <text evidence="1">Belongs to the shikimate dehydrogenase family.</text>
</comment>
<gene>
    <name evidence="1" type="primary">aroE</name>
    <name type="ordered locus">APE_0574.1</name>
</gene>
<dbReference type="EC" id="1.1.1.25" evidence="1"/>
<dbReference type="EMBL" id="BA000002">
    <property type="protein sequence ID" value="BAA79542.2"/>
    <property type="molecule type" value="Genomic_DNA"/>
</dbReference>
<dbReference type="PIR" id="F72642">
    <property type="entry name" value="F72642"/>
</dbReference>
<dbReference type="RefSeq" id="WP_010865841.1">
    <property type="nucleotide sequence ID" value="NC_000854.2"/>
</dbReference>
<dbReference type="SMR" id="Q9YEK4"/>
<dbReference type="STRING" id="272557.APE_0574.1"/>
<dbReference type="EnsemblBacteria" id="BAA79542">
    <property type="protein sequence ID" value="BAA79542"/>
    <property type="gene ID" value="APE_0574.1"/>
</dbReference>
<dbReference type="GeneID" id="1444733"/>
<dbReference type="KEGG" id="ape:APE_0574.1"/>
<dbReference type="PATRIC" id="fig|272557.25.peg.426"/>
<dbReference type="eggNOG" id="arCOG01033">
    <property type="taxonomic scope" value="Archaea"/>
</dbReference>
<dbReference type="UniPathway" id="UPA00053">
    <property type="reaction ID" value="UER00087"/>
</dbReference>
<dbReference type="Proteomes" id="UP000002518">
    <property type="component" value="Chromosome"/>
</dbReference>
<dbReference type="GO" id="GO:0004764">
    <property type="term" value="F:shikimate 3-dehydrogenase (NADP+) activity"/>
    <property type="evidence" value="ECO:0007669"/>
    <property type="project" value="UniProtKB-UniRule"/>
</dbReference>
<dbReference type="GO" id="GO:0008652">
    <property type="term" value="P:amino acid biosynthetic process"/>
    <property type="evidence" value="ECO:0007669"/>
    <property type="project" value="UniProtKB-KW"/>
</dbReference>
<dbReference type="GO" id="GO:0009073">
    <property type="term" value="P:aromatic amino acid family biosynthetic process"/>
    <property type="evidence" value="ECO:0007669"/>
    <property type="project" value="UniProtKB-KW"/>
</dbReference>
<dbReference type="GO" id="GO:0009423">
    <property type="term" value="P:chorismate biosynthetic process"/>
    <property type="evidence" value="ECO:0007669"/>
    <property type="project" value="UniProtKB-UniRule"/>
</dbReference>
<dbReference type="GO" id="GO:0019632">
    <property type="term" value="P:shikimate metabolic process"/>
    <property type="evidence" value="ECO:0007669"/>
    <property type="project" value="TreeGrafter"/>
</dbReference>
<dbReference type="CDD" id="cd01065">
    <property type="entry name" value="NAD_bind_Shikimate_DH"/>
    <property type="match status" value="1"/>
</dbReference>
<dbReference type="Gene3D" id="3.40.50.10860">
    <property type="entry name" value="Leucine Dehydrogenase, chain A, domain 1"/>
    <property type="match status" value="1"/>
</dbReference>
<dbReference type="Gene3D" id="3.40.50.720">
    <property type="entry name" value="NAD(P)-binding Rossmann-like Domain"/>
    <property type="match status" value="1"/>
</dbReference>
<dbReference type="HAMAP" id="MF_00222">
    <property type="entry name" value="Shikimate_DH_AroE"/>
    <property type="match status" value="1"/>
</dbReference>
<dbReference type="InterPro" id="IPR046346">
    <property type="entry name" value="Aminoacid_DH-like_N_sf"/>
</dbReference>
<dbReference type="InterPro" id="IPR036291">
    <property type="entry name" value="NAD(P)-bd_dom_sf"/>
</dbReference>
<dbReference type="InterPro" id="IPR013708">
    <property type="entry name" value="Shikimate_DH-bd_N"/>
</dbReference>
<dbReference type="InterPro" id="IPR022893">
    <property type="entry name" value="Shikimate_DH_fam"/>
</dbReference>
<dbReference type="InterPro" id="IPR006151">
    <property type="entry name" value="Shikm_DH/Glu-tRNA_Rdtase"/>
</dbReference>
<dbReference type="PANTHER" id="PTHR21089:SF1">
    <property type="entry name" value="BIFUNCTIONAL 3-DEHYDROQUINATE DEHYDRATASE_SHIKIMATE DEHYDROGENASE, CHLOROPLASTIC"/>
    <property type="match status" value="1"/>
</dbReference>
<dbReference type="PANTHER" id="PTHR21089">
    <property type="entry name" value="SHIKIMATE DEHYDROGENASE"/>
    <property type="match status" value="1"/>
</dbReference>
<dbReference type="Pfam" id="PF01488">
    <property type="entry name" value="Shikimate_DH"/>
    <property type="match status" value="1"/>
</dbReference>
<dbReference type="Pfam" id="PF08501">
    <property type="entry name" value="Shikimate_dh_N"/>
    <property type="match status" value="1"/>
</dbReference>
<dbReference type="SUPFAM" id="SSF53223">
    <property type="entry name" value="Aminoacid dehydrogenase-like, N-terminal domain"/>
    <property type="match status" value="1"/>
</dbReference>
<dbReference type="SUPFAM" id="SSF51735">
    <property type="entry name" value="NAD(P)-binding Rossmann-fold domains"/>
    <property type="match status" value="1"/>
</dbReference>